<accession>A3NSN6</accession>
<evidence type="ECO:0000255" key="1">
    <source>
        <dbReference type="HAMAP-Rule" id="MF_00260"/>
    </source>
</evidence>
<comment type="function">
    <text evidence="1">Tetrapolymerization of the monopyrrole PBG into the hydroxymethylbilane pre-uroporphyrinogen in several discrete steps.</text>
</comment>
<comment type="catalytic activity">
    <reaction evidence="1">
        <text>4 porphobilinogen + H2O = hydroxymethylbilane + 4 NH4(+)</text>
        <dbReference type="Rhea" id="RHEA:13185"/>
        <dbReference type="ChEBI" id="CHEBI:15377"/>
        <dbReference type="ChEBI" id="CHEBI:28938"/>
        <dbReference type="ChEBI" id="CHEBI:57845"/>
        <dbReference type="ChEBI" id="CHEBI:58126"/>
        <dbReference type="EC" id="2.5.1.61"/>
    </reaction>
</comment>
<comment type="cofactor">
    <cofactor evidence="1">
        <name>dipyrromethane</name>
        <dbReference type="ChEBI" id="CHEBI:60342"/>
    </cofactor>
    <text evidence="1">Binds 1 dipyrromethane group covalently.</text>
</comment>
<comment type="pathway">
    <text evidence="1">Porphyrin-containing compound metabolism; protoporphyrin-IX biosynthesis; coproporphyrinogen-III from 5-aminolevulinate: step 2/4.</text>
</comment>
<comment type="subunit">
    <text evidence="1">Monomer.</text>
</comment>
<comment type="miscellaneous">
    <text evidence="1">The porphobilinogen subunits are added to the dipyrromethane group.</text>
</comment>
<comment type="similarity">
    <text evidence="1">Belongs to the HMBS family.</text>
</comment>
<gene>
    <name evidence="1" type="primary">hemC</name>
    <name type="ordered locus">BURPS1106A_1077</name>
</gene>
<organism>
    <name type="scientific">Burkholderia pseudomallei (strain 1106a)</name>
    <dbReference type="NCBI Taxonomy" id="357348"/>
    <lineage>
        <taxon>Bacteria</taxon>
        <taxon>Pseudomonadati</taxon>
        <taxon>Pseudomonadota</taxon>
        <taxon>Betaproteobacteria</taxon>
        <taxon>Burkholderiales</taxon>
        <taxon>Burkholderiaceae</taxon>
        <taxon>Burkholderia</taxon>
        <taxon>pseudomallei group</taxon>
    </lineage>
</organism>
<sequence length="329" mass="34409">MNSETLPAELPATLTIASRESRLAMWQAEHVRDALRKLYPACDVKILGMTTRGDQILDRTLSKVGGKGLFVKELESALADGRADLAVHSLKDVPMALPEGFALAAVMSREDPRDAFVSNDYASLDALPAGAVVGTSSLRREAMLRARHPRLDVRPLRGNLDTRLAKLDRGDYAAIILAAAGLKRLGLAARIRALLDVDDSLPAAGQGALGIEIAARRADVAAWLAPLHDHASALAVEAERAVSRALGGSCEVPLAAHAVWRGGELHLTGSVSTTDGARVLAAHAHARAATAADALALGRRVSDALERQGARAIVDALVAASAQAQKGGA</sequence>
<reference key="1">
    <citation type="journal article" date="2010" name="Genome Biol. Evol.">
        <title>Continuing evolution of Burkholderia mallei through genome reduction and large-scale rearrangements.</title>
        <authorList>
            <person name="Losada L."/>
            <person name="Ronning C.M."/>
            <person name="DeShazer D."/>
            <person name="Woods D."/>
            <person name="Fedorova N."/>
            <person name="Kim H.S."/>
            <person name="Shabalina S.A."/>
            <person name="Pearson T.R."/>
            <person name="Brinkac L."/>
            <person name="Tan P."/>
            <person name="Nandi T."/>
            <person name="Crabtree J."/>
            <person name="Badger J."/>
            <person name="Beckstrom-Sternberg S."/>
            <person name="Saqib M."/>
            <person name="Schutzer S.E."/>
            <person name="Keim P."/>
            <person name="Nierman W.C."/>
        </authorList>
    </citation>
    <scope>NUCLEOTIDE SEQUENCE [LARGE SCALE GENOMIC DNA]</scope>
    <source>
        <strain>1106a</strain>
    </source>
</reference>
<proteinExistence type="inferred from homology"/>
<protein>
    <recommendedName>
        <fullName evidence="1">Porphobilinogen deaminase</fullName>
        <shortName evidence="1">PBG</shortName>
        <ecNumber evidence="1">2.5.1.61</ecNumber>
    </recommendedName>
    <alternativeName>
        <fullName evidence="1">Hydroxymethylbilane synthase</fullName>
        <shortName evidence="1">HMBS</shortName>
    </alternativeName>
    <alternativeName>
        <fullName evidence="1">Pre-uroporphyrinogen synthase</fullName>
    </alternativeName>
</protein>
<dbReference type="EC" id="2.5.1.61" evidence="1"/>
<dbReference type="EMBL" id="CP000572">
    <property type="protein sequence ID" value="ABN92284.1"/>
    <property type="molecule type" value="Genomic_DNA"/>
</dbReference>
<dbReference type="RefSeq" id="WP_004193185.1">
    <property type="nucleotide sequence ID" value="NC_009076.1"/>
</dbReference>
<dbReference type="SMR" id="A3NSN6"/>
<dbReference type="GeneID" id="93059515"/>
<dbReference type="KEGG" id="bpl:BURPS1106A_1077"/>
<dbReference type="HOGENOM" id="CLU_019704_0_2_4"/>
<dbReference type="UniPathway" id="UPA00251">
    <property type="reaction ID" value="UER00319"/>
</dbReference>
<dbReference type="Proteomes" id="UP000006738">
    <property type="component" value="Chromosome I"/>
</dbReference>
<dbReference type="GO" id="GO:0005737">
    <property type="term" value="C:cytoplasm"/>
    <property type="evidence" value="ECO:0007669"/>
    <property type="project" value="TreeGrafter"/>
</dbReference>
<dbReference type="GO" id="GO:0004418">
    <property type="term" value="F:hydroxymethylbilane synthase activity"/>
    <property type="evidence" value="ECO:0007669"/>
    <property type="project" value="UniProtKB-UniRule"/>
</dbReference>
<dbReference type="GO" id="GO:0006782">
    <property type="term" value="P:protoporphyrinogen IX biosynthetic process"/>
    <property type="evidence" value="ECO:0007669"/>
    <property type="project" value="UniProtKB-UniRule"/>
</dbReference>
<dbReference type="CDD" id="cd13646">
    <property type="entry name" value="PBP2_EcHMBS_like"/>
    <property type="match status" value="1"/>
</dbReference>
<dbReference type="FunFam" id="3.40.190.10:FF:000004">
    <property type="entry name" value="Porphobilinogen deaminase"/>
    <property type="match status" value="1"/>
</dbReference>
<dbReference type="FunFam" id="3.40.190.10:FF:000005">
    <property type="entry name" value="Porphobilinogen deaminase"/>
    <property type="match status" value="1"/>
</dbReference>
<dbReference type="Gene3D" id="3.40.190.10">
    <property type="entry name" value="Periplasmic binding protein-like II"/>
    <property type="match status" value="2"/>
</dbReference>
<dbReference type="Gene3D" id="3.30.160.40">
    <property type="entry name" value="Porphobilinogen deaminase, C-terminal domain"/>
    <property type="match status" value="1"/>
</dbReference>
<dbReference type="HAMAP" id="MF_00260">
    <property type="entry name" value="Porphobil_deam"/>
    <property type="match status" value="1"/>
</dbReference>
<dbReference type="InterPro" id="IPR000860">
    <property type="entry name" value="HemC"/>
</dbReference>
<dbReference type="InterPro" id="IPR022419">
    <property type="entry name" value="Porphobilin_deaminase_cofac_BS"/>
</dbReference>
<dbReference type="InterPro" id="IPR022417">
    <property type="entry name" value="Porphobilin_deaminase_N"/>
</dbReference>
<dbReference type="InterPro" id="IPR022418">
    <property type="entry name" value="Porphobilinogen_deaminase_C"/>
</dbReference>
<dbReference type="InterPro" id="IPR036803">
    <property type="entry name" value="Porphobilinogen_deaminase_C_sf"/>
</dbReference>
<dbReference type="NCBIfam" id="TIGR00212">
    <property type="entry name" value="hemC"/>
    <property type="match status" value="1"/>
</dbReference>
<dbReference type="PANTHER" id="PTHR11557">
    <property type="entry name" value="PORPHOBILINOGEN DEAMINASE"/>
    <property type="match status" value="1"/>
</dbReference>
<dbReference type="PANTHER" id="PTHR11557:SF0">
    <property type="entry name" value="PORPHOBILINOGEN DEAMINASE"/>
    <property type="match status" value="1"/>
</dbReference>
<dbReference type="Pfam" id="PF01379">
    <property type="entry name" value="Porphobil_deam"/>
    <property type="match status" value="1"/>
</dbReference>
<dbReference type="Pfam" id="PF03900">
    <property type="entry name" value="Porphobil_deamC"/>
    <property type="match status" value="1"/>
</dbReference>
<dbReference type="PIRSF" id="PIRSF001438">
    <property type="entry name" value="4pyrrol_synth_OHMeBilane_synth"/>
    <property type="match status" value="1"/>
</dbReference>
<dbReference type="PRINTS" id="PR00151">
    <property type="entry name" value="PORPHBDMNASE"/>
</dbReference>
<dbReference type="SUPFAM" id="SSF53850">
    <property type="entry name" value="Periplasmic binding protein-like II"/>
    <property type="match status" value="1"/>
</dbReference>
<dbReference type="SUPFAM" id="SSF54782">
    <property type="entry name" value="Porphobilinogen deaminase (hydroxymethylbilane synthase), C-terminal domain"/>
    <property type="match status" value="1"/>
</dbReference>
<dbReference type="PROSITE" id="PS00533">
    <property type="entry name" value="PORPHOBILINOGEN_DEAM"/>
    <property type="match status" value="1"/>
</dbReference>
<name>HEM3_BURP0</name>
<keyword id="KW-0627">Porphyrin biosynthesis</keyword>
<keyword id="KW-0808">Transferase</keyword>
<feature type="chain" id="PRO_0000304219" description="Porphobilinogen deaminase">
    <location>
        <begin position="1"/>
        <end position="329"/>
    </location>
</feature>
<feature type="modified residue" description="S-(dipyrrolylmethanemethyl)cysteine" evidence="1">
    <location>
        <position position="250"/>
    </location>
</feature>